<reference key="1">
    <citation type="journal article" date="2010" name="Asian J. Androl.">
        <title>Glucose-regulated protein precursor (GRP78) and tumor rejection antigen (GP96) are unique to hamster caput epididymal spermatozoa.</title>
        <authorList>
            <person name="Kameshwari D.B."/>
            <person name="Bhande S."/>
            <person name="Sundaram C.S."/>
            <person name="Kota V."/>
            <person name="Siva A.B."/>
            <person name="Shivaji S."/>
        </authorList>
    </citation>
    <scope>IDENTIFICATION BY MASS SPECTROMETRY</scope>
</reference>
<organism>
    <name type="scientific">Mesocricetus auratus</name>
    <name type="common">Golden hamster</name>
    <dbReference type="NCBI Taxonomy" id="10036"/>
    <lineage>
        <taxon>Eukaryota</taxon>
        <taxon>Metazoa</taxon>
        <taxon>Chordata</taxon>
        <taxon>Craniata</taxon>
        <taxon>Vertebrata</taxon>
        <taxon>Euteleostomi</taxon>
        <taxon>Mammalia</taxon>
        <taxon>Eutheria</taxon>
        <taxon>Euarchontoglires</taxon>
        <taxon>Glires</taxon>
        <taxon>Rodentia</taxon>
        <taxon>Myomorpha</taxon>
        <taxon>Muroidea</taxon>
        <taxon>Cricetidae</taxon>
        <taxon>Cricetinae</taxon>
        <taxon>Mesocricetus</taxon>
    </lineage>
</organism>
<accession>P86209</accession>
<dbReference type="SMR" id="P86209"/>
<dbReference type="Proteomes" id="UP000189706">
    <property type="component" value="Unplaced"/>
</dbReference>
<dbReference type="GO" id="GO:0008290">
    <property type="term" value="C:F-actin capping protein complex"/>
    <property type="evidence" value="ECO:0007669"/>
    <property type="project" value="InterPro"/>
</dbReference>
<dbReference type="GO" id="GO:0030017">
    <property type="term" value="C:sarcomere"/>
    <property type="evidence" value="ECO:0007669"/>
    <property type="project" value="UniProtKB-SubCell"/>
</dbReference>
<dbReference type="GO" id="GO:0003779">
    <property type="term" value="F:actin binding"/>
    <property type="evidence" value="ECO:0000250"/>
    <property type="project" value="UniProtKB"/>
</dbReference>
<dbReference type="GO" id="GO:0051015">
    <property type="term" value="F:actin filament binding"/>
    <property type="evidence" value="ECO:0007669"/>
    <property type="project" value="TreeGrafter"/>
</dbReference>
<dbReference type="GO" id="GO:0051016">
    <property type="term" value="P:barbed-end actin filament capping"/>
    <property type="evidence" value="ECO:0007669"/>
    <property type="project" value="InterPro"/>
</dbReference>
<dbReference type="GO" id="GO:0000902">
    <property type="term" value="P:cell morphogenesis"/>
    <property type="evidence" value="ECO:0007669"/>
    <property type="project" value="TreeGrafter"/>
</dbReference>
<dbReference type="GO" id="GO:0007010">
    <property type="term" value="P:cytoskeleton organization"/>
    <property type="evidence" value="ECO:0000250"/>
    <property type="project" value="UniProtKB"/>
</dbReference>
<dbReference type="GO" id="GO:0051490">
    <property type="term" value="P:negative regulation of filopodium assembly"/>
    <property type="evidence" value="ECO:0007669"/>
    <property type="project" value="TreeGrafter"/>
</dbReference>
<dbReference type="GO" id="GO:0022604">
    <property type="term" value="P:regulation of cell morphogenesis"/>
    <property type="evidence" value="ECO:0000250"/>
    <property type="project" value="UniProtKB"/>
</dbReference>
<dbReference type="GO" id="GO:0010591">
    <property type="term" value="P:regulation of lamellipodium assembly"/>
    <property type="evidence" value="ECO:0007669"/>
    <property type="project" value="TreeGrafter"/>
</dbReference>
<dbReference type="Gene3D" id="3.90.1150.210">
    <property type="entry name" value="F-actin capping protein, beta subunit"/>
    <property type="match status" value="1"/>
</dbReference>
<dbReference type="InterPro" id="IPR037282">
    <property type="entry name" value="CapZ_alpha/beta"/>
</dbReference>
<dbReference type="InterPro" id="IPR042276">
    <property type="entry name" value="CapZ_alpha/beta_2"/>
</dbReference>
<dbReference type="InterPro" id="IPR001698">
    <property type="entry name" value="CAPZB"/>
</dbReference>
<dbReference type="PANTHER" id="PTHR10619">
    <property type="entry name" value="F-ACTIN-CAPPING PROTEIN SUBUNIT BETA"/>
    <property type="match status" value="1"/>
</dbReference>
<dbReference type="PANTHER" id="PTHR10619:SF0">
    <property type="entry name" value="F-ACTIN-CAPPING PROTEIN SUBUNIT BETA ISOFORMS 1 AND 2"/>
    <property type="match status" value="1"/>
</dbReference>
<dbReference type="Pfam" id="PF01115">
    <property type="entry name" value="F_actin_cap_B"/>
    <property type="match status" value="1"/>
</dbReference>
<dbReference type="SUPFAM" id="SSF90096">
    <property type="entry name" value="Subunits of heterodimeric actin filament capping protein Capz"/>
    <property type="match status" value="1"/>
</dbReference>
<protein>
    <recommendedName>
        <fullName evidence="2">F-actin-capping protein subunit beta</fullName>
    </recommendedName>
    <alternativeName>
        <fullName evidence="2">CapZ beta</fullName>
    </alternativeName>
</protein>
<sequence length="97" mass="10833">RLPPQQIEKSPWSNKYDPPLEDGAMPSARGCWDSIHVVEVQEKSGSGTMNLGGSLTRQMEKDETVSDCSPHIANIGRLVEDMENKIRSTLNEIYFGK</sequence>
<comment type="function">
    <text evidence="1 2">F-actin-capping proteins bind in a Ca(2+)-independent manner to the fast growing ends of actin filaments (barbed end) thereby blocking the exchange of subunits at these ends. Unlike other capping proteins (such as gelsolin and severin), these proteins do not sever actin filaments. Plays a role in the regulation of cell morphology and cytoskeletal organization (By similarity). Forms, with CAPZB, the barbed end of the fast growing ends of actin filaments in the dynactin complex and stabilizes dynactin structure. The dynactin multiprotein complex activates the molecular motor dynein for ultra-processive transport along microtubules (By similarity).</text>
</comment>
<comment type="subunit">
    <text evidence="1 2">Component of the F-actin capping complex, composed of a heterodimer of an alpha and a beta subunit. Subunit of dynactin, a multiprotein complex part of a tripartite complex with dynein and a adapter, such as BICDL1, BICD2 or HOOK3. The dynactin complex is built around ACTR1A/ACTB filament and consists of an actin-related filament composed of a shoulder domain, a pointed end and a barbed end. Its length is defined by its flexible shoulder domain. The soulder is composed of 2 DCTN1 subunits, 4 DCTN2 and 2 DCTN3. The 4 DCNT2 (via N-terminus) bind the ACTR1A filament and act as molecular rulers to determine the length. The pointed end is important for binding dynein-dynactin cargo adapters. Consists of 4 subunits: ACTR10, DCNT4, DCTN5 and DCTN6. The barbed end is composed of a CAPZA1:CAPZB heterodimers, which binds ACTR1A/ACTB filament and dynactin and stabilizes dynactin (By similarity). Interacts with ARHGAP17. Interaction with RCSD1/CAPZIP. Component of the WASH complex, composed of F-actin-capping protein subunit alpha (CAPZA1, CAPZA2 or CAPZA3), F-actin-capping protein subunit beta (CAPZB), WASH (WASHC1, WASH2P, WASH3P, WASH4P, WASH5P or WASH6P), WASHC2 (WASHC2A or WASHC2C), WASHC3, WASHC4 and WASHC5. Interacts with ACTG1. Directly interacts with CRACD; this interaction decreases binding to actin (By similarity).</text>
</comment>
<comment type="subcellular location">
    <subcellularLocation>
        <location evidence="1">Cytoplasm</location>
        <location evidence="1">Cytoskeleton</location>
    </subcellularLocation>
    <subcellularLocation>
        <location evidence="1">Cytoplasm</location>
        <location evidence="1">Myofibril</location>
        <location evidence="1">Sarcomere</location>
    </subcellularLocation>
</comment>
<comment type="similarity">
    <text evidence="3">Belongs to the F-actin-capping protein beta subunit family.</text>
</comment>
<gene>
    <name evidence="2" type="primary">CAPZB</name>
</gene>
<evidence type="ECO:0000250" key="1">
    <source>
        <dbReference type="UniProtKB" id="A9XFX6"/>
    </source>
</evidence>
<evidence type="ECO:0000250" key="2">
    <source>
        <dbReference type="UniProtKB" id="P47756"/>
    </source>
</evidence>
<evidence type="ECO:0000255" key="3"/>
<evidence type="ECO:0000256" key="4">
    <source>
        <dbReference type="SAM" id="MobiDB-lite"/>
    </source>
</evidence>
<evidence type="ECO:0000305" key="5"/>
<proteinExistence type="evidence at protein level"/>
<name>CAPZB_MESAU</name>
<feature type="chain" id="PRO_0000394301" description="F-actin-capping protein subunit beta">
    <location>
        <begin position="1" status="less than"/>
        <end position="97" status="greater than"/>
    </location>
</feature>
<feature type="region of interest" description="Disordered" evidence="4">
    <location>
        <begin position="1"/>
        <end position="27"/>
    </location>
</feature>
<feature type="region of interest" description="Disordered" evidence="4">
    <location>
        <begin position="43"/>
        <end position="66"/>
    </location>
</feature>
<feature type="compositionally biased region" description="Polar residues" evidence="4">
    <location>
        <begin position="43"/>
        <end position="57"/>
    </location>
</feature>
<feature type="modified residue" description="N6-acetyllysine" evidence="2">
    <location>
        <position position="97"/>
    </location>
</feature>
<feature type="non-consecutive residues" evidence="5">
    <location>
        <begin position="9"/>
        <end position="10"/>
    </location>
</feature>
<feature type="non-consecutive residues" evidence="5">
    <location>
        <begin position="29"/>
        <end position="30"/>
    </location>
</feature>
<feature type="non-consecutive residues" evidence="5">
    <location>
        <begin position="43"/>
        <end position="44"/>
    </location>
</feature>
<feature type="non-terminal residue">
    <location>
        <position position="1"/>
    </location>
</feature>
<feature type="non-terminal residue">
    <location>
        <position position="97"/>
    </location>
</feature>
<keyword id="KW-0007">Acetylation</keyword>
<keyword id="KW-0117">Actin capping</keyword>
<keyword id="KW-0009">Actin-binding</keyword>
<keyword id="KW-0963">Cytoplasm</keyword>
<keyword id="KW-0206">Cytoskeleton</keyword>
<keyword id="KW-1185">Reference proteome</keyword>